<sequence>MRXRWPAQPSKYDRLIAAARAEAPAVTIVAHPCDETSLGGAIEAAEMGLITPILVAPEAKIRNVAAEHRLDLGRREIVDVPHSHAAAAKAVALIREGRGELLMKGSLHTDELMHEVAASATGLRTQRRISHVFVMDVPGHTDTLFITDAAINIFPDLEAKRDIVQNAIDLWVAIGLGEPRVAILSAVETVTAKIPSTIEAAALCKMAERGQITGGVLEGPLAFDNAIDQEAARIKGINSPVAGHAQILVVPDLEAGNMLAKNLTFLTHADAAGLVLGARVPIVLTSRADSVRTRLASCAVAALYAARRRAAQVAAV</sequence>
<accession>Q9X448</accession>
<comment type="catalytic activity">
    <reaction>
        <text>acetyl-CoA + phosphate = acetyl phosphate + CoA</text>
        <dbReference type="Rhea" id="RHEA:19521"/>
        <dbReference type="ChEBI" id="CHEBI:22191"/>
        <dbReference type="ChEBI" id="CHEBI:43474"/>
        <dbReference type="ChEBI" id="CHEBI:57287"/>
        <dbReference type="ChEBI" id="CHEBI:57288"/>
        <dbReference type="EC" id="2.3.1.8"/>
    </reaction>
</comment>
<comment type="pathway">
    <text>Metabolic intermediate biosynthesis; acetyl-CoA biosynthesis; acetyl-CoA from acetate: step 2/2.</text>
</comment>
<comment type="subcellular location">
    <subcellularLocation>
        <location evidence="1">Cytoplasm</location>
    </subcellularLocation>
</comment>
<comment type="similarity">
    <text evidence="1">Belongs to the phosphate acetyltransferase and butyryltransferase family.</text>
</comment>
<comment type="sequence caution" evidence="1">
    <conflict type="frameshift">
        <sequence resource="EMBL-CDS" id="AAD24357"/>
    </conflict>
</comment>
<organism>
    <name type="scientific">Rhizobium meliloti</name>
    <name type="common">Ensifer meliloti</name>
    <name type="synonym">Sinorhizobium meliloti</name>
    <dbReference type="NCBI Taxonomy" id="382"/>
    <lineage>
        <taxon>Bacteria</taxon>
        <taxon>Pseudomonadati</taxon>
        <taxon>Pseudomonadota</taxon>
        <taxon>Alphaproteobacteria</taxon>
        <taxon>Hyphomicrobiales</taxon>
        <taxon>Rhizobiaceae</taxon>
        <taxon>Sinorhizobium/Ensifer group</taxon>
        <taxon>Sinorhizobium</taxon>
    </lineage>
</organism>
<dbReference type="EC" id="2.3.1.8"/>
<dbReference type="EMBL" id="AF095903">
    <property type="protein sequence ID" value="AAD24357.1"/>
    <property type="status" value="ALT_FRAME"/>
    <property type="molecule type" value="Genomic_DNA"/>
</dbReference>
<dbReference type="UniPathway" id="UPA00340">
    <property type="reaction ID" value="UER00459"/>
</dbReference>
<dbReference type="GO" id="GO:0005737">
    <property type="term" value="C:cytoplasm"/>
    <property type="evidence" value="ECO:0007669"/>
    <property type="project" value="UniProtKB-SubCell"/>
</dbReference>
<dbReference type="GO" id="GO:0008959">
    <property type="term" value="F:phosphate acetyltransferase activity"/>
    <property type="evidence" value="ECO:0007669"/>
    <property type="project" value="UniProtKB-EC"/>
</dbReference>
<dbReference type="GO" id="GO:0006085">
    <property type="term" value="P:acetyl-CoA biosynthetic process"/>
    <property type="evidence" value="ECO:0007669"/>
    <property type="project" value="UniProtKB-UniPathway"/>
</dbReference>
<dbReference type="Gene3D" id="3.40.718.10">
    <property type="entry name" value="Isopropylmalate Dehydrogenase"/>
    <property type="match status" value="1"/>
</dbReference>
<dbReference type="InterPro" id="IPR012147">
    <property type="entry name" value="P_Ac_Bu_trans"/>
</dbReference>
<dbReference type="InterPro" id="IPR050500">
    <property type="entry name" value="Phos_Acetyltrans/Butyryltrans"/>
</dbReference>
<dbReference type="InterPro" id="IPR002505">
    <property type="entry name" value="PTA_PTB"/>
</dbReference>
<dbReference type="NCBIfam" id="NF006045">
    <property type="entry name" value="PRK08190.1"/>
    <property type="match status" value="1"/>
</dbReference>
<dbReference type="NCBIfam" id="NF008852">
    <property type="entry name" value="PRK11890.1"/>
    <property type="match status" value="1"/>
</dbReference>
<dbReference type="PANTHER" id="PTHR43356">
    <property type="entry name" value="PHOSPHATE ACETYLTRANSFERASE"/>
    <property type="match status" value="1"/>
</dbReference>
<dbReference type="PANTHER" id="PTHR43356:SF2">
    <property type="entry name" value="PHOSPHATE ACETYLTRANSFERASE"/>
    <property type="match status" value="1"/>
</dbReference>
<dbReference type="Pfam" id="PF01515">
    <property type="entry name" value="PTA_PTB"/>
    <property type="match status" value="1"/>
</dbReference>
<dbReference type="PIRSF" id="PIRSF000428">
    <property type="entry name" value="P_Ac_trans"/>
    <property type="match status" value="1"/>
</dbReference>
<dbReference type="SUPFAM" id="SSF53659">
    <property type="entry name" value="Isocitrate/Isopropylmalate dehydrogenase-like"/>
    <property type="match status" value="1"/>
</dbReference>
<proteinExistence type="inferred from homology"/>
<gene>
    <name type="primary">pta</name>
</gene>
<reference key="1">
    <citation type="journal article" date="1999" name="J. Bacteriol.">
        <title>Genes coding for phosphotransacetylase and acetate kinase in Sinorhizobium meliloti are in an operon that is inducible by phosphate stress and controlled by phoB.</title>
        <authorList>
            <person name="Summers M.L."/>
            <person name="Denton M.C."/>
            <person name="McDermott T.R."/>
        </authorList>
    </citation>
    <scope>NUCLEOTIDE SEQUENCE [GENOMIC DNA]</scope>
    <source>
        <strain>104A14</strain>
    </source>
</reference>
<evidence type="ECO:0000305" key="1"/>
<keyword id="KW-0012">Acyltransferase</keyword>
<keyword id="KW-0963">Cytoplasm</keyword>
<keyword id="KW-0808">Transferase</keyword>
<name>PTAS_RHIML</name>
<protein>
    <recommendedName>
        <fullName>Phosphate acetyltransferase</fullName>
        <ecNumber>2.3.1.8</ecNumber>
    </recommendedName>
    <alternativeName>
        <fullName>Phosphotransacetylase</fullName>
    </alternativeName>
</protein>
<feature type="chain" id="PRO_0000179137" description="Phosphate acetyltransferase">
    <location>
        <begin position="1"/>
        <end position="316"/>
    </location>
</feature>